<accession>P13550</accession>
<organism>
    <name type="scientific">Arthrospira platensis</name>
    <name type="common">Spirulina platensis</name>
    <dbReference type="NCBI Taxonomy" id="118562"/>
    <lineage>
        <taxon>Bacteria</taxon>
        <taxon>Bacillati</taxon>
        <taxon>Cyanobacteriota</taxon>
        <taxon>Cyanophyceae</taxon>
        <taxon>Oscillatoriophycideae</taxon>
        <taxon>Oscillatoriales</taxon>
        <taxon>Microcoleaceae</taxon>
        <taxon>Arthrospira</taxon>
    </lineage>
</organism>
<comment type="function">
    <text evidence="1">Catalyzes the GTP-dependent ribosomal translocation step during translation elongation. During this step, the ribosome changes from the pre-translocational (PRE) to the post-translocational (POST) state as the newly formed A-site-bound peptidyl-tRNA and P-site-bound deacylated tRNA move to the P and E sites, respectively. Catalyzes the coordinated movement of the two tRNA molecules, the mRNA and conformational changes in the ribosome (By similarity).</text>
</comment>
<comment type="subcellular location">
    <subcellularLocation>
        <location evidence="1">Cytoplasm</location>
    </subcellularLocation>
</comment>
<comment type="similarity">
    <text evidence="2">Belongs to the TRAFAC class translation factor GTPase superfamily. Classic translation factor GTPase family. EF-G/EF-2 subfamily.</text>
</comment>
<gene>
    <name type="primary">fusA</name>
    <name type="synonym">fus</name>
</gene>
<name>EFG_ARTPT</name>
<proteinExistence type="inferred from homology"/>
<reference key="1">
    <citation type="journal article" date="1989" name="Mol. Gen. Genet.">
        <title>Characterization of the str operon genes from Spirulina platensis and their evolutionary relationship to those of other prokaryotes.</title>
        <authorList>
            <person name="Buttarelli F.R."/>
            <person name="Calogero R.A."/>
            <person name="Tiboni O."/>
            <person name="Gualerzi C.O."/>
            <person name="Pon C.L."/>
        </authorList>
    </citation>
    <scope>NUCLEOTIDE SEQUENCE [GENOMIC DNA]</scope>
</reference>
<feature type="chain" id="PRO_0000091213" description="Elongation factor G">
    <location>
        <begin position="1"/>
        <end position="697"/>
    </location>
</feature>
<feature type="domain" description="tr-type G">
    <location>
        <begin position="8"/>
        <end position="287"/>
    </location>
</feature>
<feature type="binding site" evidence="1">
    <location>
        <begin position="17"/>
        <end position="24"/>
    </location>
    <ligand>
        <name>GTP</name>
        <dbReference type="ChEBI" id="CHEBI:37565"/>
    </ligand>
</feature>
<feature type="binding site" evidence="1">
    <location>
        <begin position="81"/>
        <end position="85"/>
    </location>
    <ligand>
        <name>GTP</name>
        <dbReference type="ChEBI" id="CHEBI:37565"/>
    </ligand>
</feature>
<feature type="binding site" evidence="1">
    <location>
        <begin position="135"/>
        <end position="138"/>
    </location>
    <ligand>
        <name>GTP</name>
        <dbReference type="ChEBI" id="CHEBI:37565"/>
    </ligand>
</feature>
<dbReference type="EMBL" id="X15646">
    <property type="protein sequence ID" value="CAA33672.1"/>
    <property type="molecule type" value="Genomic_DNA"/>
</dbReference>
<dbReference type="PIR" id="S04390">
    <property type="entry name" value="S04390"/>
</dbReference>
<dbReference type="SMR" id="P13550"/>
<dbReference type="GO" id="GO:0005737">
    <property type="term" value="C:cytoplasm"/>
    <property type="evidence" value="ECO:0007669"/>
    <property type="project" value="UniProtKB-SubCell"/>
</dbReference>
<dbReference type="GO" id="GO:0005525">
    <property type="term" value="F:GTP binding"/>
    <property type="evidence" value="ECO:0007669"/>
    <property type="project" value="UniProtKB-UniRule"/>
</dbReference>
<dbReference type="GO" id="GO:0003924">
    <property type="term" value="F:GTPase activity"/>
    <property type="evidence" value="ECO:0007669"/>
    <property type="project" value="InterPro"/>
</dbReference>
<dbReference type="GO" id="GO:0003746">
    <property type="term" value="F:translation elongation factor activity"/>
    <property type="evidence" value="ECO:0007669"/>
    <property type="project" value="UniProtKB-UniRule"/>
</dbReference>
<dbReference type="GO" id="GO:0032790">
    <property type="term" value="P:ribosome disassembly"/>
    <property type="evidence" value="ECO:0007669"/>
    <property type="project" value="TreeGrafter"/>
</dbReference>
<dbReference type="CDD" id="cd01886">
    <property type="entry name" value="EF-G"/>
    <property type="match status" value="1"/>
</dbReference>
<dbReference type="CDD" id="cd16262">
    <property type="entry name" value="EFG_III"/>
    <property type="match status" value="1"/>
</dbReference>
<dbReference type="CDD" id="cd01434">
    <property type="entry name" value="EFG_mtEFG1_IV"/>
    <property type="match status" value="1"/>
</dbReference>
<dbReference type="CDD" id="cd03713">
    <property type="entry name" value="EFG_mtEFG_C"/>
    <property type="match status" value="1"/>
</dbReference>
<dbReference type="CDD" id="cd04088">
    <property type="entry name" value="EFG_mtEFG_II"/>
    <property type="match status" value="1"/>
</dbReference>
<dbReference type="FunFam" id="2.40.30.10:FF:000006">
    <property type="entry name" value="Elongation factor G"/>
    <property type="match status" value="1"/>
</dbReference>
<dbReference type="FunFam" id="3.30.230.10:FF:000003">
    <property type="entry name" value="Elongation factor G"/>
    <property type="match status" value="1"/>
</dbReference>
<dbReference type="FunFam" id="3.30.70.240:FF:000001">
    <property type="entry name" value="Elongation factor G"/>
    <property type="match status" value="1"/>
</dbReference>
<dbReference type="FunFam" id="3.30.70.870:FF:000001">
    <property type="entry name" value="Elongation factor G"/>
    <property type="match status" value="1"/>
</dbReference>
<dbReference type="FunFam" id="3.40.50.300:FF:000029">
    <property type="entry name" value="Elongation factor G"/>
    <property type="match status" value="1"/>
</dbReference>
<dbReference type="Gene3D" id="3.30.230.10">
    <property type="match status" value="1"/>
</dbReference>
<dbReference type="Gene3D" id="3.30.70.240">
    <property type="match status" value="1"/>
</dbReference>
<dbReference type="Gene3D" id="3.30.70.870">
    <property type="entry name" value="Elongation Factor G (Translational Gtpase), domain 3"/>
    <property type="match status" value="1"/>
</dbReference>
<dbReference type="Gene3D" id="3.40.50.300">
    <property type="entry name" value="P-loop containing nucleotide triphosphate hydrolases"/>
    <property type="match status" value="1"/>
</dbReference>
<dbReference type="Gene3D" id="2.40.30.10">
    <property type="entry name" value="Translation factors"/>
    <property type="match status" value="1"/>
</dbReference>
<dbReference type="HAMAP" id="MF_00054_B">
    <property type="entry name" value="EF_G_EF_2_B"/>
    <property type="match status" value="1"/>
</dbReference>
<dbReference type="InterPro" id="IPR041095">
    <property type="entry name" value="EFG_II"/>
</dbReference>
<dbReference type="InterPro" id="IPR009022">
    <property type="entry name" value="EFG_III"/>
</dbReference>
<dbReference type="InterPro" id="IPR035647">
    <property type="entry name" value="EFG_III/V"/>
</dbReference>
<dbReference type="InterPro" id="IPR047872">
    <property type="entry name" value="EFG_IV"/>
</dbReference>
<dbReference type="InterPro" id="IPR035649">
    <property type="entry name" value="EFG_V"/>
</dbReference>
<dbReference type="InterPro" id="IPR000640">
    <property type="entry name" value="EFG_V-like"/>
</dbReference>
<dbReference type="InterPro" id="IPR004161">
    <property type="entry name" value="EFTu-like_2"/>
</dbReference>
<dbReference type="InterPro" id="IPR031157">
    <property type="entry name" value="G_TR_CS"/>
</dbReference>
<dbReference type="InterPro" id="IPR027417">
    <property type="entry name" value="P-loop_NTPase"/>
</dbReference>
<dbReference type="InterPro" id="IPR020568">
    <property type="entry name" value="Ribosomal_Su5_D2-typ_SF"/>
</dbReference>
<dbReference type="InterPro" id="IPR014721">
    <property type="entry name" value="Ribsml_uS5_D2-typ_fold_subgr"/>
</dbReference>
<dbReference type="InterPro" id="IPR005225">
    <property type="entry name" value="Small_GTP-bd"/>
</dbReference>
<dbReference type="InterPro" id="IPR000795">
    <property type="entry name" value="T_Tr_GTP-bd_dom"/>
</dbReference>
<dbReference type="InterPro" id="IPR009000">
    <property type="entry name" value="Transl_B-barrel_sf"/>
</dbReference>
<dbReference type="InterPro" id="IPR004540">
    <property type="entry name" value="Transl_elong_EFG/EF2"/>
</dbReference>
<dbReference type="InterPro" id="IPR005517">
    <property type="entry name" value="Transl_elong_EFG/EF2_IV"/>
</dbReference>
<dbReference type="NCBIfam" id="TIGR00484">
    <property type="entry name" value="EF-G"/>
    <property type="match status" value="1"/>
</dbReference>
<dbReference type="NCBIfam" id="NF009379">
    <property type="entry name" value="PRK12740.1-3"/>
    <property type="match status" value="1"/>
</dbReference>
<dbReference type="NCBIfam" id="NF009381">
    <property type="entry name" value="PRK12740.1-5"/>
    <property type="match status" value="1"/>
</dbReference>
<dbReference type="NCBIfam" id="TIGR00231">
    <property type="entry name" value="small_GTP"/>
    <property type="match status" value="1"/>
</dbReference>
<dbReference type="PANTHER" id="PTHR43261:SF1">
    <property type="entry name" value="RIBOSOME-RELEASING FACTOR 2, MITOCHONDRIAL"/>
    <property type="match status" value="1"/>
</dbReference>
<dbReference type="PANTHER" id="PTHR43261">
    <property type="entry name" value="TRANSLATION ELONGATION FACTOR G-RELATED"/>
    <property type="match status" value="1"/>
</dbReference>
<dbReference type="Pfam" id="PF00679">
    <property type="entry name" value="EFG_C"/>
    <property type="match status" value="1"/>
</dbReference>
<dbReference type="Pfam" id="PF14492">
    <property type="entry name" value="EFG_III"/>
    <property type="match status" value="1"/>
</dbReference>
<dbReference type="Pfam" id="PF03764">
    <property type="entry name" value="EFG_IV"/>
    <property type="match status" value="1"/>
</dbReference>
<dbReference type="Pfam" id="PF00009">
    <property type="entry name" value="GTP_EFTU"/>
    <property type="match status" value="1"/>
</dbReference>
<dbReference type="Pfam" id="PF03144">
    <property type="entry name" value="GTP_EFTU_D2"/>
    <property type="match status" value="1"/>
</dbReference>
<dbReference type="PRINTS" id="PR00315">
    <property type="entry name" value="ELONGATNFCT"/>
</dbReference>
<dbReference type="SMART" id="SM00838">
    <property type="entry name" value="EFG_C"/>
    <property type="match status" value="1"/>
</dbReference>
<dbReference type="SMART" id="SM00889">
    <property type="entry name" value="EFG_IV"/>
    <property type="match status" value="1"/>
</dbReference>
<dbReference type="SUPFAM" id="SSF54980">
    <property type="entry name" value="EF-G C-terminal domain-like"/>
    <property type="match status" value="2"/>
</dbReference>
<dbReference type="SUPFAM" id="SSF52540">
    <property type="entry name" value="P-loop containing nucleoside triphosphate hydrolases"/>
    <property type="match status" value="1"/>
</dbReference>
<dbReference type="SUPFAM" id="SSF54211">
    <property type="entry name" value="Ribosomal protein S5 domain 2-like"/>
    <property type="match status" value="1"/>
</dbReference>
<dbReference type="SUPFAM" id="SSF50447">
    <property type="entry name" value="Translation proteins"/>
    <property type="match status" value="1"/>
</dbReference>
<dbReference type="PROSITE" id="PS00301">
    <property type="entry name" value="G_TR_1"/>
    <property type="match status" value="1"/>
</dbReference>
<dbReference type="PROSITE" id="PS51722">
    <property type="entry name" value="G_TR_2"/>
    <property type="match status" value="1"/>
</dbReference>
<evidence type="ECO:0000250" key="1"/>
<evidence type="ECO:0000305" key="2"/>
<protein>
    <recommendedName>
        <fullName>Elongation factor G</fullName>
        <shortName>EF-G</shortName>
    </recommendedName>
</protein>
<sequence length="697" mass="76775">MARTIPLERVRNIGIAAHIDAGKTTTTERILFYSGVVHKMGEVHEGTAVTDWMAQERERGITITAAAISTSWLDHRINIIDTPGHVDFTIEVERSMRVLDGVIAVFCSVGGVQPQSETVWRQAERYQVPRIAFINKMDRTGADFFKVYGQIRDRLRANAVPIQVPVGRESDFHGLVDLVAMKTYLYTNDLGTDIQVSDEIPEEVQDLVAEYREKLLEAVAETDEALMEKYLEQLEGGEALTEEEIRHSLRQGTIKGLIVPVICGSSFKNRGVQRLLDAVVDYLPAPTEVPPIKGVLPDGEEGVRYADDDAPLSALAFKVMADPYGRLTFVRVYSGVLQKGSYIYNATKNKKERISRLIVLKSDERIEVEELRAGDLGAALGLKDTLTGDTICDEANSIILESLYIPEPVISVAVEPKTKQDMEKLSKALQSLSEEDPTFRVSIDSETNQTVIAGMGELHLEILVDRMLREFKVEANIGAPQVAYRETIRKSIRTEGKFIRQSGGKGQYGHVVIELEPGEPGSGFEFVSKIVGGSVPKEYINPAEQGMKEACESGVIAGYPLIDVKATLVDGSYHEVDSSEMAFKIAGSMAIKNGVTKASPVLLEPMMKVEVEVPEDFIGNVIGDLNSRRGQIEGQETDQSQSIAKVVAKVPLATMFGYATDIRSKTQGRGVFSMEFSHYEEVPRSVAETIIAKSKGN</sequence>
<keyword id="KW-0963">Cytoplasm</keyword>
<keyword id="KW-0251">Elongation factor</keyword>
<keyword id="KW-0342">GTP-binding</keyword>
<keyword id="KW-0547">Nucleotide-binding</keyword>
<keyword id="KW-0648">Protein biosynthesis</keyword>